<accession>Q9RSS7</accession>
<name>RL11_DEIRA</name>
<protein>
    <recommendedName>
        <fullName evidence="1">Large ribosomal subunit protein uL11</fullName>
    </recommendedName>
    <alternativeName>
        <fullName evidence="8">50S ribosomal protein L11</fullName>
    </alternativeName>
</protein>
<feature type="chain" id="PRO_0000104280" description="Large ribosomal subunit protein uL11">
    <location>
        <begin position="1"/>
        <end position="144"/>
    </location>
</feature>
<feature type="strand" evidence="11">
    <location>
        <begin position="6"/>
        <end position="9"/>
    </location>
</feature>
<feature type="strand" evidence="12">
    <location>
        <begin position="14"/>
        <end position="16"/>
    </location>
</feature>
<feature type="strand" evidence="11">
    <location>
        <begin position="20"/>
        <end position="27"/>
    </location>
</feature>
<feature type="turn" evidence="12">
    <location>
        <begin position="28"/>
        <end position="30"/>
    </location>
</feature>
<feature type="turn" evidence="11">
    <location>
        <begin position="38"/>
        <end position="40"/>
    </location>
</feature>
<feature type="helix" evidence="11">
    <location>
        <begin position="41"/>
        <end position="43"/>
    </location>
</feature>
<feature type="turn" evidence="11">
    <location>
        <begin position="45"/>
        <end position="47"/>
    </location>
</feature>
<feature type="strand" evidence="11">
    <location>
        <begin position="55"/>
        <end position="59"/>
    </location>
</feature>
<feature type="strand" evidence="9">
    <location>
        <begin position="61"/>
        <end position="63"/>
    </location>
</feature>
<feature type="strand" evidence="11">
    <location>
        <begin position="66"/>
        <end position="69"/>
    </location>
</feature>
<feature type="strand" evidence="11">
    <location>
        <begin position="76"/>
        <end position="79"/>
    </location>
</feature>
<feature type="turn" evidence="11">
    <location>
        <begin position="80"/>
        <end position="83"/>
    </location>
</feature>
<feature type="strand" evidence="11">
    <location>
        <begin position="91"/>
        <end position="94"/>
    </location>
</feature>
<feature type="strand" evidence="10">
    <location>
        <begin position="97"/>
        <end position="99"/>
    </location>
</feature>
<feature type="strand" evidence="11">
    <location>
        <begin position="101"/>
        <end position="104"/>
    </location>
</feature>
<feature type="turn" evidence="11">
    <location>
        <begin position="105"/>
        <end position="110"/>
    </location>
</feature>
<feature type="strand" evidence="11">
    <location>
        <begin position="111"/>
        <end position="114"/>
    </location>
</feature>
<feature type="strand" evidence="9">
    <location>
        <begin position="117"/>
        <end position="119"/>
    </location>
</feature>
<feature type="helix" evidence="11">
    <location>
        <begin position="120"/>
        <end position="125"/>
    </location>
</feature>
<feature type="turn" evidence="11">
    <location>
        <begin position="126"/>
        <end position="134"/>
    </location>
</feature>
<feature type="strand" evidence="10">
    <location>
        <begin position="136"/>
        <end position="138"/>
    </location>
</feature>
<keyword id="KW-0002">3D-structure</keyword>
<keyword id="KW-0903">Direct protein sequencing</keyword>
<keyword id="KW-0488">Methylation</keyword>
<keyword id="KW-1185">Reference proteome</keyword>
<keyword id="KW-0687">Ribonucleoprotein</keyword>
<keyword id="KW-0689">Ribosomal protein</keyword>
<keyword id="KW-0694">RNA-binding</keyword>
<keyword id="KW-0699">rRNA-binding</keyword>
<sequence length="144" mass="14872">MKKVAGIVKLQLPAGKATPAPPVGPALGQYGANIMEFTKAFNAQTADKGDAIIPVEITIYADRSFTFITKTPPMSYLIRKAAGIGKGSSTPNKAKVGKLNWDQVLEIAKTKMPDLNAGSVEAAANTVAGTARSMGVTVEGGPNA</sequence>
<proteinExistence type="evidence at protein level"/>
<evidence type="ECO:0000255" key="1">
    <source>
        <dbReference type="HAMAP-Rule" id="MF_00736"/>
    </source>
</evidence>
<evidence type="ECO:0000269" key="2">
    <source>
    </source>
</evidence>
<evidence type="ECO:0000269" key="3">
    <source>
    </source>
</evidence>
<evidence type="ECO:0000269" key="4">
    <source>
    </source>
</evidence>
<evidence type="ECO:0000269" key="5">
    <source>
    </source>
</evidence>
<evidence type="ECO:0000269" key="6">
    <source>
    </source>
</evidence>
<evidence type="ECO:0000269" key="7">
    <source>
    </source>
</evidence>
<evidence type="ECO:0000305" key="8"/>
<evidence type="ECO:0007829" key="9">
    <source>
        <dbReference type="PDB" id="2ZJQ"/>
    </source>
</evidence>
<evidence type="ECO:0007829" key="10">
    <source>
        <dbReference type="PDB" id="2ZJR"/>
    </source>
</evidence>
<evidence type="ECO:0007829" key="11">
    <source>
        <dbReference type="PDB" id="5DM6"/>
    </source>
</evidence>
<evidence type="ECO:0007829" key="12">
    <source>
        <dbReference type="PDB" id="5DM7"/>
    </source>
</evidence>
<reference key="1">
    <citation type="journal article" date="1999" name="Science">
        <title>Genome sequence of the radioresistant bacterium Deinococcus radiodurans R1.</title>
        <authorList>
            <person name="White O."/>
            <person name="Eisen J.A."/>
            <person name="Heidelberg J.F."/>
            <person name="Hickey E.K."/>
            <person name="Peterson J.D."/>
            <person name="Dodson R.J."/>
            <person name="Haft D.H."/>
            <person name="Gwinn M.L."/>
            <person name="Nelson W.C."/>
            <person name="Richardson D.L."/>
            <person name="Moffat K.S."/>
            <person name="Qin H."/>
            <person name="Jiang L."/>
            <person name="Pamphile W."/>
            <person name="Crosby M."/>
            <person name="Shen M."/>
            <person name="Vamathevan J.J."/>
            <person name="Lam P."/>
            <person name="McDonald L.A."/>
            <person name="Utterback T.R."/>
            <person name="Zalewski C."/>
            <person name="Makarova K.S."/>
            <person name="Aravind L."/>
            <person name="Daly M.J."/>
            <person name="Minton K.W."/>
            <person name="Fleischmann R.D."/>
            <person name="Ketchum K.A."/>
            <person name="Nelson K.E."/>
            <person name="Salzberg S.L."/>
            <person name="Smith H.O."/>
            <person name="Venter J.C."/>
            <person name="Fraser C.M."/>
        </authorList>
    </citation>
    <scope>NUCLEOTIDE SEQUENCE [LARGE SCALE GENOMIC DNA]</scope>
    <source>
        <strain>ATCC 13939 / DSM 20539 / JCM 16871 / CCUG 27074 / LMG 4051 / NBRC 15346 / NCIMB 9279 / VKM B-1422 / R1</strain>
    </source>
</reference>
<reference key="2">
    <citation type="journal article" date="2001" name="Cell">
        <title>High resolution structure of the large ribosomal subunit from a mesophilic eubacterium.</title>
        <authorList>
            <person name="Harms J."/>
            <person name="Schluenzen F."/>
            <person name="Zarivach R."/>
            <person name="Bashan A."/>
            <person name="Gat S."/>
            <person name="Agmon I."/>
            <person name="Bartels H."/>
            <person name="Franceschi F."/>
            <person name="Yonath A."/>
        </authorList>
    </citation>
    <scope>X-RAY CRYSTALLOGRAPHY (3.1 ANGSTROMS) OF THE 50S SUBUNIT</scope>
    <scope>PROTEIN SEQUENCE OF 1-5</scope>
    <source>
        <strain>ATCC 13939 / DSM 20539 / JCM 16871 / CCUG 27074 / LMG 4051 / NBRC 15346 / NCIMB 9279 / VKM B-1422 / R1</strain>
    </source>
</reference>
<reference key="3">
    <citation type="journal article" date="2001" name="Nature">
        <title>Structural basis for the interaction of antibiotics with the peptidyl transferase centre in eubacteria.</title>
        <authorList>
            <person name="Schluenzen F."/>
            <person name="Zarivach R."/>
            <person name="Harms J."/>
            <person name="Bashan A."/>
            <person name="Tocilj A."/>
            <person name="Albrecht R."/>
            <person name="Yonath A."/>
            <person name="Franceschi F."/>
        </authorList>
    </citation>
    <scope>X-RAY CRYSTALLOGRAPHY (3.1 ANGSTROMS) OF THE 50S SUBUNIT IN COMPLEX WITH FIVE ANTIBIOTICS</scope>
    <source>
        <strain>ATCC 13939 / DSM 20539 / JCM 16871 / CCUG 27074 / LMG 4051 / NBRC 15346 / NCIMB 9279 / VKM B-1422 / R1</strain>
    </source>
</reference>
<reference key="4">
    <citation type="journal article" date="2003" name="Mol. Cell">
        <title>Structural basis of the ribosomal machinery for peptide bond formation, translocation, and nascent chain progression.</title>
        <authorList>
            <person name="Bashan A."/>
            <person name="Agmon I."/>
            <person name="Zarivach R."/>
            <person name="Schluenzen F."/>
            <person name="Harms J."/>
            <person name="Berisio R."/>
            <person name="Bartels H."/>
            <person name="Franceschi F."/>
            <person name="Auerbach T."/>
            <person name="Hansen H.A."/>
            <person name="Kossoy E."/>
            <person name="Kessler M."/>
            <person name="Yonath A."/>
        </authorList>
    </citation>
    <scope>X-RAY CRYSTALLOGRAPHY (3.5 ANGSTROMS) OF THE 50S SUBUNIT IN COMPLEX WITH TRNA MIMICS</scope>
    <source>
        <strain>ATCC 13939 / DSM 20539 / JCM 16871 / CCUG 27074 / LMG 4051 / NBRC 15346 / NCIMB 9279 / VKM B-1422 / R1</strain>
    </source>
</reference>
<reference key="5">
    <citation type="journal article" date="2003" name="Structure">
        <title>Structural basis for the antibiotic activity of ketolides and azalides.</title>
        <authorList>
            <person name="Schluenzen F."/>
            <person name="Harms J.M."/>
            <person name="Franceschi F."/>
            <person name="Hansen H.A."/>
            <person name="Bartels H."/>
            <person name="Zarivach R."/>
            <person name="Yonath A."/>
        </authorList>
    </citation>
    <scope>X-RAY CRYSTALLOGRAPHY (3.3 ANGSTROMS) OF THE 50S SUBUNIT IN COMPLEX WITH MODIFIED MACROLIDE ANTIBIOTICS</scope>
    <source>
        <strain>ATCC 13939 / DSM 20539 / JCM 16871 / CCUG 27074 / LMG 4051 / NBRC 15346 / NCIMB 9279 / VKM B-1422 / R1</strain>
    </source>
</reference>
<reference key="6">
    <citation type="journal article" date="2003" name="Nat. Struct. Biol.">
        <title>Structural insight into the role of the ribosomal tunnel in cellular regulation.</title>
        <authorList>
            <person name="Berisio R."/>
            <person name="Schluenzen F."/>
            <person name="Harms J."/>
            <person name="Bashan A."/>
            <person name="Auerbach T."/>
            <person name="Baram D."/>
            <person name="Yonath A."/>
        </authorList>
    </citation>
    <scope>X-RAY CRYSTALLOGRAPHY (3.4 ANGSTROMS) OF THE 50S SUBUNIT IN COMPLEX WITH TROLEANDOMYCIN</scope>
    <source>
        <strain>ATCC 13939 / DSM 20539 / JCM 16871 / CCUG 27074 / LMG 4051 / NBRC 15346 / NCIMB 9279 / VKM B-1422 / R1</strain>
    </source>
</reference>
<reference key="7">
    <citation type="journal article" date="2004" name="BMC Biol.">
        <title>Alterations at the peptidyl transferase centre of the ribosome induced by the synergistic action of the streptogramins dalfopristin and quinupristin.</title>
        <authorList>
            <person name="Harms J.M."/>
            <person name="Schluenzen F."/>
            <person name="Fucini P."/>
            <person name="Bartels H."/>
            <person name="Yonath A."/>
        </authorList>
    </citation>
    <scope>X-RAY CRYSTALLOGRAPHY (3.4 ANGSTROMS) OF THE 50S SUBUNIT IN COMPLEX WITH THE STREPTOGRAMINS QUINUPRISTIN AND DALFOPRISTIN</scope>
    <source>
        <strain>ATCC 13939 / DSM 20539 / JCM 16871 / CCUG 27074 / LMG 4051 / NBRC 15346 / NCIMB 9279 / VKM B-1422 / R1</strain>
    </source>
</reference>
<reference key="8">
    <citation type="journal article" date="2004" name="Mol. Microbiol.">
        <title>Inhibition of peptide bond formation by pleuromutilins: the structure of the 50S ribosomal subunit from Deinococcus radiodurans in complex with tiamulin.</title>
        <authorList>
            <person name="Schluenzen F."/>
            <person name="Pyetan E."/>
            <person name="Fucini P."/>
            <person name="Yonath A."/>
            <person name="Harms J.M."/>
        </authorList>
    </citation>
    <scope>X-RAY CRYSTALLOGRAPHY (3.5 ANGSTROMS) OF THE 50S SUBUNIT IN COMPLEX WITH TIAMULIN</scope>
    <source>
        <strain>ATCC 13939 / DSM 20539 / JCM 16871 / CCUG 27074 / LMG 4051 / NBRC 15346 / NCIMB 9279 / VKM B-1422 / R1</strain>
    </source>
</reference>
<gene>
    <name evidence="1" type="primary">rplK</name>
    <name type="ordered locus">DR_2046</name>
</gene>
<dbReference type="EMBL" id="AE000513">
    <property type="protein sequence ID" value="AAF11593.1"/>
    <property type="molecule type" value="Genomic_DNA"/>
</dbReference>
<dbReference type="PIR" id="G75323">
    <property type="entry name" value="G75323"/>
</dbReference>
<dbReference type="RefSeq" id="NP_295769.1">
    <property type="nucleotide sequence ID" value="NC_001263.1"/>
</dbReference>
<dbReference type="RefSeq" id="WP_010888678.1">
    <property type="nucleotide sequence ID" value="NC_001263.1"/>
</dbReference>
<dbReference type="PDB" id="1NKW">
    <property type="method" value="X-ray"/>
    <property type="resolution" value="3.10 A"/>
    <property type="chains" value="G=1-144"/>
</dbReference>
<dbReference type="PDB" id="1NWX">
    <property type="method" value="X-ray"/>
    <property type="resolution" value="3.50 A"/>
    <property type="chains" value="G=1-144"/>
</dbReference>
<dbReference type="PDB" id="1NWY">
    <property type="method" value="X-ray"/>
    <property type="resolution" value="3.30 A"/>
    <property type="chains" value="G=1-144"/>
</dbReference>
<dbReference type="PDB" id="1SM1">
    <property type="method" value="X-ray"/>
    <property type="resolution" value="3.42 A"/>
    <property type="chains" value="G=1-144"/>
</dbReference>
<dbReference type="PDB" id="1XBP">
    <property type="method" value="X-ray"/>
    <property type="resolution" value="3.50 A"/>
    <property type="chains" value="G=1-144"/>
</dbReference>
<dbReference type="PDB" id="2ZJP">
    <property type="method" value="X-ray"/>
    <property type="resolution" value="3.70 A"/>
    <property type="chains" value="F=1-144"/>
</dbReference>
<dbReference type="PDB" id="2ZJQ">
    <property type="method" value="X-ray"/>
    <property type="resolution" value="3.30 A"/>
    <property type="chains" value="F=1-144"/>
</dbReference>
<dbReference type="PDB" id="2ZJR">
    <property type="method" value="X-ray"/>
    <property type="resolution" value="2.91 A"/>
    <property type="chains" value="F=1-144"/>
</dbReference>
<dbReference type="PDB" id="3CF5">
    <property type="method" value="X-ray"/>
    <property type="resolution" value="3.30 A"/>
    <property type="chains" value="F=1-144"/>
</dbReference>
<dbReference type="PDB" id="3DLL">
    <property type="method" value="X-ray"/>
    <property type="resolution" value="3.50 A"/>
    <property type="chains" value="F=1-144"/>
</dbReference>
<dbReference type="PDB" id="3PIO">
    <property type="method" value="X-ray"/>
    <property type="resolution" value="3.25 A"/>
    <property type="chains" value="F=1-144"/>
</dbReference>
<dbReference type="PDB" id="3PIP">
    <property type="method" value="X-ray"/>
    <property type="resolution" value="3.45 A"/>
    <property type="chains" value="F=1-144"/>
</dbReference>
<dbReference type="PDB" id="4IO9">
    <property type="method" value="X-ray"/>
    <property type="resolution" value="3.20 A"/>
    <property type="chains" value="F=1-144"/>
</dbReference>
<dbReference type="PDB" id="4IOA">
    <property type="method" value="X-ray"/>
    <property type="resolution" value="3.20 A"/>
    <property type="chains" value="F=1-144"/>
</dbReference>
<dbReference type="PDB" id="4IOC">
    <property type="method" value="X-ray"/>
    <property type="resolution" value="3.60 A"/>
    <property type="chains" value="F=1-144"/>
</dbReference>
<dbReference type="PDB" id="4V49">
    <property type="method" value="X-ray"/>
    <property type="resolution" value="8.70 A"/>
    <property type="chains" value="G=1-143"/>
</dbReference>
<dbReference type="PDB" id="4V4A">
    <property type="method" value="X-ray"/>
    <property type="resolution" value="9.50 A"/>
    <property type="chains" value="G=1-143"/>
</dbReference>
<dbReference type="PDB" id="4V4G">
    <property type="method" value="X-ray"/>
    <property type="resolution" value="11.50 A"/>
    <property type="chains" value="J=1-143"/>
</dbReference>
<dbReference type="PDB" id="5DM6">
    <property type="method" value="X-ray"/>
    <property type="resolution" value="2.90 A"/>
    <property type="chains" value="F=4-144"/>
</dbReference>
<dbReference type="PDB" id="5DM7">
    <property type="method" value="X-ray"/>
    <property type="resolution" value="3.00 A"/>
    <property type="chains" value="F=1-144"/>
</dbReference>
<dbReference type="PDB" id="5JVG">
    <property type="method" value="X-ray"/>
    <property type="resolution" value="3.43 A"/>
    <property type="chains" value="F=1-144"/>
</dbReference>
<dbReference type="PDBsum" id="1NKW"/>
<dbReference type="PDBsum" id="1NWX"/>
<dbReference type="PDBsum" id="1NWY"/>
<dbReference type="PDBsum" id="1SM1"/>
<dbReference type="PDBsum" id="1XBP"/>
<dbReference type="PDBsum" id="2ZJP"/>
<dbReference type="PDBsum" id="2ZJQ"/>
<dbReference type="PDBsum" id="2ZJR"/>
<dbReference type="PDBsum" id="3CF5"/>
<dbReference type="PDBsum" id="3DLL"/>
<dbReference type="PDBsum" id="3PIO"/>
<dbReference type="PDBsum" id="3PIP"/>
<dbReference type="PDBsum" id="4IO9"/>
<dbReference type="PDBsum" id="4IOA"/>
<dbReference type="PDBsum" id="4IOC"/>
<dbReference type="PDBsum" id="4V49"/>
<dbReference type="PDBsum" id="4V4A"/>
<dbReference type="PDBsum" id="4V4G"/>
<dbReference type="PDBsum" id="5DM6"/>
<dbReference type="PDBsum" id="5DM7"/>
<dbReference type="PDBsum" id="5JVG"/>
<dbReference type="SMR" id="Q9RSS7"/>
<dbReference type="FunCoup" id="Q9RSS7">
    <property type="interactions" value="505"/>
</dbReference>
<dbReference type="IntAct" id="Q9RSS7">
    <property type="interactions" value="29"/>
</dbReference>
<dbReference type="STRING" id="243230.DR_2046"/>
<dbReference type="PaxDb" id="243230-DR_2046"/>
<dbReference type="EnsemblBacteria" id="AAF11593">
    <property type="protein sequence ID" value="AAF11593"/>
    <property type="gene ID" value="DR_2046"/>
</dbReference>
<dbReference type="GeneID" id="69518285"/>
<dbReference type="KEGG" id="dra:DR_2046"/>
<dbReference type="PATRIC" id="fig|243230.17.peg.2273"/>
<dbReference type="eggNOG" id="COG0080">
    <property type="taxonomic scope" value="Bacteria"/>
</dbReference>
<dbReference type="HOGENOM" id="CLU_074237_2_1_0"/>
<dbReference type="InParanoid" id="Q9RSS7"/>
<dbReference type="OrthoDB" id="9802408at2"/>
<dbReference type="EvolutionaryTrace" id="Q9RSS7"/>
<dbReference type="Proteomes" id="UP000002524">
    <property type="component" value="Chromosome 1"/>
</dbReference>
<dbReference type="GO" id="GO:0022625">
    <property type="term" value="C:cytosolic large ribosomal subunit"/>
    <property type="evidence" value="ECO:0000318"/>
    <property type="project" value="GO_Central"/>
</dbReference>
<dbReference type="GO" id="GO:0070180">
    <property type="term" value="F:large ribosomal subunit rRNA binding"/>
    <property type="evidence" value="ECO:0000318"/>
    <property type="project" value="GO_Central"/>
</dbReference>
<dbReference type="GO" id="GO:0003735">
    <property type="term" value="F:structural constituent of ribosome"/>
    <property type="evidence" value="ECO:0000318"/>
    <property type="project" value="GO_Central"/>
</dbReference>
<dbReference type="GO" id="GO:0006412">
    <property type="term" value="P:translation"/>
    <property type="evidence" value="ECO:0000318"/>
    <property type="project" value="GO_Central"/>
</dbReference>
<dbReference type="CDD" id="cd00349">
    <property type="entry name" value="Ribosomal_L11"/>
    <property type="match status" value="1"/>
</dbReference>
<dbReference type="FunFam" id="1.10.10.250:FF:000001">
    <property type="entry name" value="50S ribosomal protein L11"/>
    <property type="match status" value="1"/>
</dbReference>
<dbReference type="FunFam" id="3.30.1550.10:FF:000001">
    <property type="entry name" value="50S ribosomal protein L11"/>
    <property type="match status" value="1"/>
</dbReference>
<dbReference type="Gene3D" id="1.10.10.250">
    <property type="entry name" value="Ribosomal protein L11, C-terminal domain"/>
    <property type="match status" value="1"/>
</dbReference>
<dbReference type="Gene3D" id="3.30.1550.10">
    <property type="entry name" value="Ribosomal protein L11/L12, N-terminal domain"/>
    <property type="match status" value="1"/>
</dbReference>
<dbReference type="HAMAP" id="MF_00736">
    <property type="entry name" value="Ribosomal_uL11"/>
    <property type="match status" value="1"/>
</dbReference>
<dbReference type="InterPro" id="IPR000911">
    <property type="entry name" value="Ribosomal_uL11"/>
</dbReference>
<dbReference type="InterPro" id="IPR006519">
    <property type="entry name" value="Ribosomal_uL11_bac-typ"/>
</dbReference>
<dbReference type="InterPro" id="IPR020783">
    <property type="entry name" value="Ribosomal_uL11_C"/>
</dbReference>
<dbReference type="InterPro" id="IPR036769">
    <property type="entry name" value="Ribosomal_uL11_C_sf"/>
</dbReference>
<dbReference type="InterPro" id="IPR020785">
    <property type="entry name" value="Ribosomal_uL11_CS"/>
</dbReference>
<dbReference type="InterPro" id="IPR020784">
    <property type="entry name" value="Ribosomal_uL11_N"/>
</dbReference>
<dbReference type="InterPro" id="IPR036796">
    <property type="entry name" value="Ribosomal_uL11_N_sf"/>
</dbReference>
<dbReference type="NCBIfam" id="TIGR01632">
    <property type="entry name" value="L11_bact"/>
    <property type="match status" value="1"/>
</dbReference>
<dbReference type="PANTHER" id="PTHR11661">
    <property type="entry name" value="60S RIBOSOMAL PROTEIN L12"/>
    <property type="match status" value="1"/>
</dbReference>
<dbReference type="PANTHER" id="PTHR11661:SF1">
    <property type="entry name" value="LARGE RIBOSOMAL SUBUNIT PROTEIN UL11M"/>
    <property type="match status" value="1"/>
</dbReference>
<dbReference type="Pfam" id="PF00298">
    <property type="entry name" value="Ribosomal_L11"/>
    <property type="match status" value="1"/>
</dbReference>
<dbReference type="Pfam" id="PF03946">
    <property type="entry name" value="Ribosomal_L11_N"/>
    <property type="match status" value="1"/>
</dbReference>
<dbReference type="SMART" id="SM00649">
    <property type="entry name" value="RL11"/>
    <property type="match status" value="1"/>
</dbReference>
<dbReference type="SUPFAM" id="SSF54747">
    <property type="entry name" value="Ribosomal L11/L12e N-terminal domain"/>
    <property type="match status" value="1"/>
</dbReference>
<dbReference type="SUPFAM" id="SSF46906">
    <property type="entry name" value="Ribosomal protein L11, C-terminal domain"/>
    <property type="match status" value="1"/>
</dbReference>
<dbReference type="PROSITE" id="PS00359">
    <property type="entry name" value="RIBOSOMAL_L11"/>
    <property type="match status" value="1"/>
</dbReference>
<comment type="function">
    <text evidence="8">Forms part of the ribosomal stalk which helps the ribosome interact with GTP-bound translation factors.</text>
</comment>
<comment type="subunit">
    <text evidence="1 2 3 4 5 6 7">Part of the ribosomal stalk of the 50S ribosomal subunit. Interacts with L10 and the large rRNA to form the base of the stalk. L10 forms an elongated spine to which L12 dimers bind in a sequential fashion forming a multimeric L10(L12)X complex (By similarity). Contacts the CTC protein (RL25).</text>
</comment>
<comment type="PTM">
    <text evidence="1">One or more lysine residues are methylated.</text>
</comment>
<comment type="similarity">
    <text evidence="1">Belongs to the universal ribosomal protein uL11 family.</text>
</comment>
<organism>
    <name type="scientific">Deinococcus radiodurans (strain ATCC 13939 / DSM 20539 / JCM 16871 / CCUG 27074 / LMG 4051 / NBRC 15346 / NCIMB 9279 / VKM B-1422 / R1)</name>
    <dbReference type="NCBI Taxonomy" id="243230"/>
    <lineage>
        <taxon>Bacteria</taxon>
        <taxon>Thermotogati</taxon>
        <taxon>Deinococcota</taxon>
        <taxon>Deinococci</taxon>
        <taxon>Deinococcales</taxon>
        <taxon>Deinococcaceae</taxon>
        <taxon>Deinococcus</taxon>
    </lineage>
</organism>